<proteinExistence type="inferred from homology"/>
<organism>
    <name type="scientific">Archaeoglobus fulgidus (strain ATCC 49558 / DSM 4304 / JCM 9628 / NBRC 100126 / VC-16)</name>
    <dbReference type="NCBI Taxonomy" id="224325"/>
    <lineage>
        <taxon>Archaea</taxon>
        <taxon>Methanobacteriati</taxon>
        <taxon>Methanobacteriota</taxon>
        <taxon>Archaeoglobi</taxon>
        <taxon>Archaeoglobales</taxon>
        <taxon>Archaeoglobaceae</taxon>
        <taxon>Archaeoglobus</taxon>
    </lineage>
</organism>
<keyword id="KW-0963">Cytoplasm</keyword>
<keyword id="KW-0413">Isomerase</keyword>
<keyword id="KW-0627">Porphyrin biosynthesis</keyword>
<keyword id="KW-0663">Pyridoxal phosphate</keyword>
<keyword id="KW-1185">Reference proteome</keyword>
<reference key="1">
    <citation type="journal article" date="1997" name="Nature">
        <title>The complete genome sequence of the hyperthermophilic, sulphate-reducing archaeon Archaeoglobus fulgidus.</title>
        <authorList>
            <person name="Klenk H.-P."/>
            <person name="Clayton R.A."/>
            <person name="Tomb J.-F."/>
            <person name="White O."/>
            <person name="Nelson K.E."/>
            <person name="Ketchum K.A."/>
            <person name="Dodson R.J."/>
            <person name="Gwinn M.L."/>
            <person name="Hickey E.K."/>
            <person name="Peterson J.D."/>
            <person name="Richardson D.L."/>
            <person name="Kerlavage A.R."/>
            <person name="Graham D.E."/>
            <person name="Kyrpides N.C."/>
            <person name="Fleischmann R.D."/>
            <person name="Quackenbush J."/>
            <person name="Lee N.H."/>
            <person name="Sutton G.G."/>
            <person name="Gill S.R."/>
            <person name="Kirkness E.F."/>
            <person name="Dougherty B.A."/>
            <person name="McKenney K."/>
            <person name="Adams M.D."/>
            <person name="Loftus B.J."/>
            <person name="Peterson S.N."/>
            <person name="Reich C.I."/>
            <person name="McNeil L.K."/>
            <person name="Badger J.H."/>
            <person name="Glodek A."/>
            <person name="Zhou L."/>
            <person name="Overbeek R."/>
            <person name="Gocayne J.D."/>
            <person name="Weidman J.F."/>
            <person name="McDonald L.A."/>
            <person name="Utterback T.R."/>
            <person name="Cotton M.D."/>
            <person name="Spriggs T."/>
            <person name="Artiach P."/>
            <person name="Kaine B.P."/>
            <person name="Sykes S.M."/>
            <person name="Sadow P.W."/>
            <person name="D'Andrea K.P."/>
            <person name="Bowman C."/>
            <person name="Fujii C."/>
            <person name="Garland S.A."/>
            <person name="Mason T.M."/>
            <person name="Olsen G.J."/>
            <person name="Fraser C.M."/>
            <person name="Smith H.O."/>
            <person name="Woese C.R."/>
            <person name="Venter J.C."/>
        </authorList>
    </citation>
    <scope>NUCLEOTIDE SEQUENCE [LARGE SCALE GENOMIC DNA]</scope>
    <source>
        <strain>ATCC 49558 / DSM 4304 / JCM 9628 / NBRC 100126 / VC-16</strain>
    </source>
</reference>
<feature type="chain" id="PRO_0000120477" description="Glutamate-1-semialdehyde 2,1-aminomutase">
    <location>
        <begin position="1"/>
        <end position="418"/>
    </location>
</feature>
<feature type="modified residue" description="N6-(pyridoxal phosphate)lysine" evidence="1">
    <location>
        <position position="262"/>
    </location>
</feature>
<comment type="catalytic activity">
    <reaction>
        <text>(S)-4-amino-5-oxopentanoate = 5-aminolevulinate</text>
        <dbReference type="Rhea" id="RHEA:14265"/>
        <dbReference type="ChEBI" id="CHEBI:57501"/>
        <dbReference type="ChEBI" id="CHEBI:356416"/>
        <dbReference type="EC" id="5.4.3.8"/>
    </reaction>
</comment>
<comment type="cofactor">
    <cofactor evidence="1">
        <name>pyridoxal 5'-phosphate</name>
        <dbReference type="ChEBI" id="CHEBI:597326"/>
    </cofactor>
</comment>
<comment type="pathway">
    <text>Porphyrin-containing compound metabolism; protoporphyrin-IX biosynthesis; 5-aminolevulinate from L-glutamyl-tRNA(Glu): step 2/2.</text>
</comment>
<comment type="subcellular location">
    <subcellularLocation>
        <location evidence="2">Cytoplasm</location>
    </subcellularLocation>
</comment>
<comment type="similarity">
    <text evidence="2">Belongs to the class-III pyridoxal-phosphate-dependent aminotransferase family. HemL subfamily.</text>
</comment>
<dbReference type="EC" id="5.4.3.8"/>
<dbReference type="EMBL" id="AE000782">
    <property type="protein sequence ID" value="AAB90001.1"/>
    <property type="molecule type" value="Genomic_DNA"/>
</dbReference>
<dbReference type="PIR" id="H69404">
    <property type="entry name" value="H69404"/>
</dbReference>
<dbReference type="RefSeq" id="WP_010878736.1">
    <property type="nucleotide sequence ID" value="NC_000917.1"/>
</dbReference>
<dbReference type="SMR" id="O29027"/>
<dbReference type="STRING" id="224325.AF_1241"/>
<dbReference type="PaxDb" id="224325-AF_1241"/>
<dbReference type="EnsemblBacteria" id="AAB90001">
    <property type="protein sequence ID" value="AAB90001"/>
    <property type="gene ID" value="AF_1241"/>
</dbReference>
<dbReference type="GeneID" id="24794844"/>
<dbReference type="KEGG" id="afu:AF_1241"/>
<dbReference type="eggNOG" id="arCOG00918">
    <property type="taxonomic scope" value="Archaea"/>
</dbReference>
<dbReference type="HOGENOM" id="CLU_016922_1_5_2"/>
<dbReference type="OrthoDB" id="6524at2157"/>
<dbReference type="PhylomeDB" id="O29027"/>
<dbReference type="UniPathway" id="UPA00251">
    <property type="reaction ID" value="UER00317"/>
</dbReference>
<dbReference type="Proteomes" id="UP000002199">
    <property type="component" value="Chromosome"/>
</dbReference>
<dbReference type="GO" id="GO:0005737">
    <property type="term" value="C:cytoplasm"/>
    <property type="evidence" value="ECO:0007669"/>
    <property type="project" value="UniProtKB-SubCell"/>
</dbReference>
<dbReference type="GO" id="GO:0042286">
    <property type="term" value="F:glutamate-1-semialdehyde 2,1-aminomutase activity"/>
    <property type="evidence" value="ECO:0007669"/>
    <property type="project" value="UniProtKB-UniRule"/>
</dbReference>
<dbReference type="GO" id="GO:0030170">
    <property type="term" value="F:pyridoxal phosphate binding"/>
    <property type="evidence" value="ECO:0007669"/>
    <property type="project" value="InterPro"/>
</dbReference>
<dbReference type="GO" id="GO:0008483">
    <property type="term" value="F:transaminase activity"/>
    <property type="evidence" value="ECO:0007669"/>
    <property type="project" value="InterPro"/>
</dbReference>
<dbReference type="GO" id="GO:0006782">
    <property type="term" value="P:protoporphyrinogen IX biosynthetic process"/>
    <property type="evidence" value="ECO:0007669"/>
    <property type="project" value="UniProtKB-UniRule"/>
</dbReference>
<dbReference type="CDD" id="cd00610">
    <property type="entry name" value="OAT_like"/>
    <property type="match status" value="1"/>
</dbReference>
<dbReference type="FunFam" id="3.40.640.10:FF:000021">
    <property type="entry name" value="Glutamate-1-semialdehyde 2,1-aminomutase"/>
    <property type="match status" value="1"/>
</dbReference>
<dbReference type="Gene3D" id="3.90.1150.10">
    <property type="entry name" value="Aspartate Aminotransferase, domain 1"/>
    <property type="match status" value="1"/>
</dbReference>
<dbReference type="Gene3D" id="3.40.640.10">
    <property type="entry name" value="Type I PLP-dependent aspartate aminotransferase-like (Major domain)"/>
    <property type="match status" value="1"/>
</dbReference>
<dbReference type="HAMAP" id="MF_00375">
    <property type="entry name" value="HemL_aminotrans_3"/>
    <property type="match status" value="1"/>
</dbReference>
<dbReference type="InterPro" id="IPR004639">
    <property type="entry name" value="4pyrrol_synth_GluAld_NH2Trfase"/>
</dbReference>
<dbReference type="InterPro" id="IPR005814">
    <property type="entry name" value="Aminotrans_3"/>
</dbReference>
<dbReference type="InterPro" id="IPR049704">
    <property type="entry name" value="Aminotrans_3_PPA_site"/>
</dbReference>
<dbReference type="InterPro" id="IPR015424">
    <property type="entry name" value="PyrdxlP-dep_Trfase"/>
</dbReference>
<dbReference type="InterPro" id="IPR015421">
    <property type="entry name" value="PyrdxlP-dep_Trfase_major"/>
</dbReference>
<dbReference type="InterPro" id="IPR015422">
    <property type="entry name" value="PyrdxlP-dep_Trfase_small"/>
</dbReference>
<dbReference type="NCBIfam" id="TIGR00713">
    <property type="entry name" value="hemL"/>
    <property type="match status" value="1"/>
</dbReference>
<dbReference type="NCBIfam" id="NF000818">
    <property type="entry name" value="PRK00062.1"/>
    <property type="match status" value="1"/>
</dbReference>
<dbReference type="PANTHER" id="PTHR43713">
    <property type="entry name" value="GLUTAMATE-1-SEMIALDEHYDE 2,1-AMINOMUTASE"/>
    <property type="match status" value="1"/>
</dbReference>
<dbReference type="PANTHER" id="PTHR43713:SF3">
    <property type="entry name" value="GLUTAMATE-1-SEMIALDEHYDE 2,1-AMINOMUTASE 1, CHLOROPLASTIC-RELATED"/>
    <property type="match status" value="1"/>
</dbReference>
<dbReference type="Pfam" id="PF00202">
    <property type="entry name" value="Aminotran_3"/>
    <property type="match status" value="1"/>
</dbReference>
<dbReference type="SUPFAM" id="SSF53383">
    <property type="entry name" value="PLP-dependent transferases"/>
    <property type="match status" value="1"/>
</dbReference>
<dbReference type="PROSITE" id="PS00600">
    <property type="entry name" value="AA_TRANSFER_CLASS_3"/>
    <property type="match status" value="1"/>
</dbReference>
<evidence type="ECO:0000250" key="1"/>
<evidence type="ECO:0000305" key="2"/>
<name>GSA_ARCFU</name>
<sequence length="418" mass="45754">MKLDKSRKLYAEALNLMPGGVSSPVRAFKPHPFYTARGKGSKIYDVDGNAYIDYCMAYGPLVLGHANEVVKNALAEQLERGWLYGTPIELEIEYAKLIQKYFPSMEMLRFVNTGSEATMAALRVARGFTGRDKIVKVEGSFHGAHDAVLVKAGSGATTHGIPNSAGVPADFVKNTLQVPFNDIEALSEILEKNEVAALILEPVMGNSSLILPEKDYLKEVRKVTAENDVLLIFDEVITGFRVSMGGAQEYYGVKPDLTTLGKIAGGGLPIGIFGGRKEIMERVAPSGDVYQAGTFSGNPLSLTAGYATVKFMEENGVIEKVNSLTEKLVSGIADVLEDKKAECEVGSLASMFCIYFGPTPRNYAEALQLNKERFMEFFWRMLENGVFLPPSQYETCFVSFAHTEEDVEKTVEAVSESL</sequence>
<protein>
    <recommendedName>
        <fullName>Glutamate-1-semialdehyde 2,1-aminomutase</fullName>
        <shortName>GSA</shortName>
        <ecNumber>5.4.3.8</ecNumber>
    </recommendedName>
    <alternativeName>
        <fullName>Glutamate-1-semialdehyde aminotransferase</fullName>
        <shortName>GSA-AT</shortName>
    </alternativeName>
</protein>
<accession>O29027</accession>
<gene>
    <name type="primary">hemL</name>
    <name type="ordered locus">AF_1241</name>
</gene>